<feature type="chain" id="PRO_1000198932" description="Arginine--tRNA ligase">
    <location>
        <begin position="1"/>
        <end position="554"/>
    </location>
</feature>
<feature type="short sequence motif" description="'HIGH' region">
    <location>
        <begin position="130"/>
        <end position="140"/>
    </location>
</feature>
<comment type="catalytic activity">
    <reaction evidence="1">
        <text>tRNA(Arg) + L-arginine + ATP = L-arginyl-tRNA(Arg) + AMP + diphosphate</text>
        <dbReference type="Rhea" id="RHEA:20301"/>
        <dbReference type="Rhea" id="RHEA-COMP:9658"/>
        <dbReference type="Rhea" id="RHEA-COMP:9673"/>
        <dbReference type="ChEBI" id="CHEBI:30616"/>
        <dbReference type="ChEBI" id="CHEBI:32682"/>
        <dbReference type="ChEBI" id="CHEBI:33019"/>
        <dbReference type="ChEBI" id="CHEBI:78442"/>
        <dbReference type="ChEBI" id="CHEBI:78513"/>
        <dbReference type="ChEBI" id="CHEBI:456215"/>
        <dbReference type="EC" id="6.1.1.19"/>
    </reaction>
</comment>
<comment type="subunit">
    <text evidence="1">Monomer.</text>
</comment>
<comment type="subcellular location">
    <subcellularLocation>
        <location evidence="1">Cytoplasm</location>
    </subcellularLocation>
</comment>
<comment type="similarity">
    <text evidence="1">Belongs to the class-I aminoacyl-tRNA synthetase family.</text>
</comment>
<accession>B9DKQ7</accession>
<protein>
    <recommendedName>
        <fullName evidence="1">Arginine--tRNA ligase</fullName>
        <ecNumber evidence="1">6.1.1.19</ecNumber>
    </recommendedName>
    <alternativeName>
        <fullName evidence="1">Arginyl-tRNA synthetase</fullName>
        <shortName evidence="1">ArgRS</shortName>
    </alternativeName>
</protein>
<reference key="1">
    <citation type="journal article" date="2009" name="Appl. Environ. Microbiol.">
        <title>Genome analysis of the meat starter culture bacterium Staphylococcus carnosus TM300.</title>
        <authorList>
            <person name="Rosenstein R."/>
            <person name="Nerz C."/>
            <person name="Biswas L."/>
            <person name="Resch A."/>
            <person name="Raddatz G."/>
            <person name="Schuster S.C."/>
            <person name="Goetz F."/>
        </authorList>
    </citation>
    <scope>NUCLEOTIDE SEQUENCE [LARGE SCALE GENOMIC DNA]</scope>
    <source>
        <strain>TM300</strain>
    </source>
</reference>
<dbReference type="EC" id="6.1.1.19" evidence="1"/>
<dbReference type="EMBL" id="AM295250">
    <property type="protein sequence ID" value="CAL27172.1"/>
    <property type="molecule type" value="Genomic_DNA"/>
</dbReference>
<dbReference type="RefSeq" id="WP_012664287.1">
    <property type="nucleotide sequence ID" value="NC_012121.1"/>
</dbReference>
<dbReference type="SMR" id="B9DKQ7"/>
<dbReference type="GeneID" id="93795188"/>
<dbReference type="KEGG" id="sca:SCA_0259"/>
<dbReference type="eggNOG" id="COG0018">
    <property type="taxonomic scope" value="Bacteria"/>
</dbReference>
<dbReference type="HOGENOM" id="CLU_006406_0_1_9"/>
<dbReference type="OrthoDB" id="9805987at2"/>
<dbReference type="BioCyc" id="SCAR396513:SCA_RS01325-MONOMER"/>
<dbReference type="Proteomes" id="UP000000444">
    <property type="component" value="Chromosome"/>
</dbReference>
<dbReference type="GO" id="GO:0005737">
    <property type="term" value="C:cytoplasm"/>
    <property type="evidence" value="ECO:0007669"/>
    <property type="project" value="UniProtKB-SubCell"/>
</dbReference>
<dbReference type="GO" id="GO:0004814">
    <property type="term" value="F:arginine-tRNA ligase activity"/>
    <property type="evidence" value="ECO:0007669"/>
    <property type="project" value="UniProtKB-UniRule"/>
</dbReference>
<dbReference type="GO" id="GO:0005524">
    <property type="term" value="F:ATP binding"/>
    <property type="evidence" value="ECO:0007669"/>
    <property type="project" value="UniProtKB-UniRule"/>
</dbReference>
<dbReference type="GO" id="GO:0006420">
    <property type="term" value="P:arginyl-tRNA aminoacylation"/>
    <property type="evidence" value="ECO:0007669"/>
    <property type="project" value="UniProtKB-UniRule"/>
</dbReference>
<dbReference type="CDD" id="cd00671">
    <property type="entry name" value="ArgRS_core"/>
    <property type="match status" value="1"/>
</dbReference>
<dbReference type="FunFam" id="1.10.730.10:FF:000008">
    <property type="entry name" value="Arginine--tRNA ligase"/>
    <property type="match status" value="1"/>
</dbReference>
<dbReference type="FunFam" id="3.30.1360.70:FF:000003">
    <property type="entry name" value="Arginine--tRNA ligase"/>
    <property type="match status" value="1"/>
</dbReference>
<dbReference type="FunFam" id="3.40.50.620:FF:000062">
    <property type="entry name" value="Arginine--tRNA ligase"/>
    <property type="match status" value="1"/>
</dbReference>
<dbReference type="Gene3D" id="3.30.1360.70">
    <property type="entry name" value="Arginyl tRNA synthetase N-terminal domain"/>
    <property type="match status" value="1"/>
</dbReference>
<dbReference type="Gene3D" id="3.40.50.620">
    <property type="entry name" value="HUPs"/>
    <property type="match status" value="1"/>
</dbReference>
<dbReference type="Gene3D" id="1.10.730.10">
    <property type="entry name" value="Isoleucyl-tRNA Synthetase, Domain 1"/>
    <property type="match status" value="1"/>
</dbReference>
<dbReference type="HAMAP" id="MF_00123">
    <property type="entry name" value="Arg_tRNA_synth"/>
    <property type="match status" value="1"/>
</dbReference>
<dbReference type="InterPro" id="IPR001412">
    <property type="entry name" value="aa-tRNA-synth_I_CS"/>
</dbReference>
<dbReference type="InterPro" id="IPR001278">
    <property type="entry name" value="Arg-tRNA-ligase"/>
</dbReference>
<dbReference type="InterPro" id="IPR005148">
    <property type="entry name" value="Arg-tRNA-synth_N"/>
</dbReference>
<dbReference type="InterPro" id="IPR036695">
    <property type="entry name" value="Arg-tRNA-synth_N_sf"/>
</dbReference>
<dbReference type="InterPro" id="IPR035684">
    <property type="entry name" value="ArgRS_core"/>
</dbReference>
<dbReference type="InterPro" id="IPR008909">
    <property type="entry name" value="DALR_anticod-bd"/>
</dbReference>
<dbReference type="InterPro" id="IPR014729">
    <property type="entry name" value="Rossmann-like_a/b/a_fold"/>
</dbReference>
<dbReference type="InterPro" id="IPR009080">
    <property type="entry name" value="tRNAsynth_Ia_anticodon-bd"/>
</dbReference>
<dbReference type="NCBIfam" id="TIGR00456">
    <property type="entry name" value="argS"/>
    <property type="match status" value="1"/>
</dbReference>
<dbReference type="PANTHER" id="PTHR11956:SF5">
    <property type="entry name" value="ARGININE--TRNA LIGASE, CYTOPLASMIC"/>
    <property type="match status" value="1"/>
</dbReference>
<dbReference type="PANTHER" id="PTHR11956">
    <property type="entry name" value="ARGINYL-TRNA SYNTHETASE"/>
    <property type="match status" value="1"/>
</dbReference>
<dbReference type="Pfam" id="PF03485">
    <property type="entry name" value="Arg_tRNA_synt_N"/>
    <property type="match status" value="1"/>
</dbReference>
<dbReference type="Pfam" id="PF05746">
    <property type="entry name" value="DALR_1"/>
    <property type="match status" value="1"/>
</dbReference>
<dbReference type="Pfam" id="PF00750">
    <property type="entry name" value="tRNA-synt_1d"/>
    <property type="match status" value="1"/>
</dbReference>
<dbReference type="PRINTS" id="PR01038">
    <property type="entry name" value="TRNASYNTHARG"/>
</dbReference>
<dbReference type="SMART" id="SM01016">
    <property type="entry name" value="Arg_tRNA_synt_N"/>
    <property type="match status" value="1"/>
</dbReference>
<dbReference type="SMART" id="SM00836">
    <property type="entry name" value="DALR_1"/>
    <property type="match status" value="1"/>
</dbReference>
<dbReference type="SUPFAM" id="SSF47323">
    <property type="entry name" value="Anticodon-binding domain of a subclass of class I aminoacyl-tRNA synthetases"/>
    <property type="match status" value="1"/>
</dbReference>
<dbReference type="SUPFAM" id="SSF55190">
    <property type="entry name" value="Arginyl-tRNA synthetase (ArgRS), N-terminal 'additional' domain"/>
    <property type="match status" value="1"/>
</dbReference>
<dbReference type="SUPFAM" id="SSF52374">
    <property type="entry name" value="Nucleotidylyl transferase"/>
    <property type="match status" value="1"/>
</dbReference>
<dbReference type="PROSITE" id="PS00178">
    <property type="entry name" value="AA_TRNA_LIGASE_I"/>
    <property type="match status" value="1"/>
</dbReference>
<organism>
    <name type="scientific">Staphylococcus carnosus (strain TM300)</name>
    <dbReference type="NCBI Taxonomy" id="396513"/>
    <lineage>
        <taxon>Bacteria</taxon>
        <taxon>Bacillati</taxon>
        <taxon>Bacillota</taxon>
        <taxon>Bacilli</taxon>
        <taxon>Bacillales</taxon>
        <taxon>Staphylococcaceae</taxon>
        <taxon>Staphylococcus</taxon>
    </lineage>
</organism>
<keyword id="KW-0030">Aminoacyl-tRNA synthetase</keyword>
<keyword id="KW-0067">ATP-binding</keyword>
<keyword id="KW-0963">Cytoplasm</keyword>
<keyword id="KW-0436">Ligase</keyword>
<keyword id="KW-0547">Nucleotide-binding</keyword>
<keyword id="KW-0648">Protein biosynthesis</keyword>
<keyword id="KW-1185">Reference proteome</keyword>
<gene>
    <name evidence="1" type="primary">argS</name>
    <name type="ordered locus">Sca_0259</name>
</gene>
<proteinExistence type="inferred from homology"/>
<evidence type="ECO:0000255" key="1">
    <source>
        <dbReference type="HAMAP-Rule" id="MF_00123"/>
    </source>
</evidence>
<sequence length="554" mass="62563">MNIIDQVKQTLIEEITASVKAAGLAEEVPEVKVEIPKDPKNGDYSTNIAMVLTKIAKRNPHEIAQAIVDHLDKSKANVEKIEIAGPGFINFYLNNQYLTAVIPEALEKDKDFGRNEDPKHQKVLVEYVSANPTGDLHIGHARNAAVGDTLSNILDAAGYDVTREYYINDAGNQITNLAHSIEARYDQAMGKETELPADGYYGKDIINIGKDLAEKRPELKDLPEDERLKVFRQLGVDYEMEKLKKDLADFNTHFDGWFSETTLYDKGEIKKVLELMKENGYTYEADGATWLRTTDFNDDKDRVIIKKDGSYTYFLPDVAYHYDKFHRDGGQDILINLFGADHHGYINRLKASVETYGIDADRLEIQIMQMVRLMQDGEEVKMSKRTGNAITLREIMDEVGIDAARYFLTMRSPDTHFDFDMELAKENSAENPVYYAQYAHARISSILKQAGERGITPSENADFSVITNDKAIDLLKKVAEFEPMIESAAEHRAPHRVTNYIQELASAFHKFYNADKVLTDDEKKTQAYVSMIAAVQITLRNALALVGVSAPHNM</sequence>
<name>SYR_STACT</name>